<protein>
    <recommendedName>
        <fullName>Melanoma-associated antigen B5</fullName>
    </recommendedName>
    <alternativeName>
        <fullName>Cancer/testis antigen 3.3</fullName>
        <shortName>CT3.3</shortName>
    </alternativeName>
    <alternativeName>
        <fullName>MAGE-B5 antigen</fullName>
    </alternativeName>
</protein>
<organism>
    <name type="scientific">Homo sapiens</name>
    <name type="common">Human</name>
    <dbReference type="NCBI Taxonomy" id="9606"/>
    <lineage>
        <taxon>Eukaryota</taxon>
        <taxon>Metazoa</taxon>
        <taxon>Chordata</taxon>
        <taxon>Craniata</taxon>
        <taxon>Vertebrata</taxon>
        <taxon>Euteleostomi</taxon>
        <taxon>Mammalia</taxon>
        <taxon>Eutheria</taxon>
        <taxon>Euarchontoglires</taxon>
        <taxon>Primates</taxon>
        <taxon>Haplorrhini</taxon>
        <taxon>Catarrhini</taxon>
        <taxon>Hominidae</taxon>
        <taxon>Homo</taxon>
    </lineage>
</organism>
<comment type="tissue specificity">
    <text>Expressed in testis. Not expressed in other normal tissues, but is expressed in tumors of different histological origins.</text>
</comment>
<reference key="1">
    <citation type="journal article" date="2005" name="Nature">
        <title>The DNA sequence of the human X chromosome.</title>
        <authorList>
            <person name="Ross M.T."/>
            <person name="Grafham D.V."/>
            <person name="Coffey A.J."/>
            <person name="Scherer S."/>
            <person name="McLay K."/>
            <person name="Muzny D."/>
            <person name="Platzer M."/>
            <person name="Howell G.R."/>
            <person name="Burrows C."/>
            <person name="Bird C.P."/>
            <person name="Frankish A."/>
            <person name="Lovell F.L."/>
            <person name="Howe K.L."/>
            <person name="Ashurst J.L."/>
            <person name="Fulton R.S."/>
            <person name="Sudbrak R."/>
            <person name="Wen G."/>
            <person name="Jones M.C."/>
            <person name="Hurles M.E."/>
            <person name="Andrews T.D."/>
            <person name="Scott C.E."/>
            <person name="Searle S."/>
            <person name="Ramser J."/>
            <person name="Whittaker A."/>
            <person name="Deadman R."/>
            <person name="Carter N.P."/>
            <person name="Hunt S.E."/>
            <person name="Chen R."/>
            <person name="Cree A."/>
            <person name="Gunaratne P."/>
            <person name="Havlak P."/>
            <person name="Hodgson A."/>
            <person name="Metzker M.L."/>
            <person name="Richards S."/>
            <person name="Scott G."/>
            <person name="Steffen D."/>
            <person name="Sodergren E."/>
            <person name="Wheeler D.A."/>
            <person name="Worley K.C."/>
            <person name="Ainscough R."/>
            <person name="Ambrose K.D."/>
            <person name="Ansari-Lari M.A."/>
            <person name="Aradhya S."/>
            <person name="Ashwell R.I."/>
            <person name="Babbage A.K."/>
            <person name="Bagguley C.L."/>
            <person name="Ballabio A."/>
            <person name="Banerjee R."/>
            <person name="Barker G.E."/>
            <person name="Barlow K.F."/>
            <person name="Barrett I.P."/>
            <person name="Bates K.N."/>
            <person name="Beare D.M."/>
            <person name="Beasley H."/>
            <person name="Beasley O."/>
            <person name="Beck A."/>
            <person name="Bethel G."/>
            <person name="Blechschmidt K."/>
            <person name="Brady N."/>
            <person name="Bray-Allen S."/>
            <person name="Bridgeman A.M."/>
            <person name="Brown A.J."/>
            <person name="Brown M.J."/>
            <person name="Bonnin D."/>
            <person name="Bruford E.A."/>
            <person name="Buhay C."/>
            <person name="Burch P."/>
            <person name="Burford D."/>
            <person name="Burgess J."/>
            <person name="Burrill W."/>
            <person name="Burton J."/>
            <person name="Bye J.M."/>
            <person name="Carder C."/>
            <person name="Carrel L."/>
            <person name="Chako J."/>
            <person name="Chapman J.C."/>
            <person name="Chavez D."/>
            <person name="Chen E."/>
            <person name="Chen G."/>
            <person name="Chen Y."/>
            <person name="Chen Z."/>
            <person name="Chinault C."/>
            <person name="Ciccodicola A."/>
            <person name="Clark S.Y."/>
            <person name="Clarke G."/>
            <person name="Clee C.M."/>
            <person name="Clegg S."/>
            <person name="Clerc-Blankenburg K."/>
            <person name="Clifford K."/>
            <person name="Cobley V."/>
            <person name="Cole C.G."/>
            <person name="Conquer J.S."/>
            <person name="Corby N."/>
            <person name="Connor R.E."/>
            <person name="David R."/>
            <person name="Davies J."/>
            <person name="Davis C."/>
            <person name="Davis J."/>
            <person name="Delgado O."/>
            <person name="Deshazo D."/>
            <person name="Dhami P."/>
            <person name="Ding Y."/>
            <person name="Dinh H."/>
            <person name="Dodsworth S."/>
            <person name="Draper H."/>
            <person name="Dugan-Rocha S."/>
            <person name="Dunham A."/>
            <person name="Dunn M."/>
            <person name="Durbin K.J."/>
            <person name="Dutta I."/>
            <person name="Eades T."/>
            <person name="Ellwood M."/>
            <person name="Emery-Cohen A."/>
            <person name="Errington H."/>
            <person name="Evans K.L."/>
            <person name="Faulkner L."/>
            <person name="Francis F."/>
            <person name="Frankland J."/>
            <person name="Fraser A.E."/>
            <person name="Galgoczy P."/>
            <person name="Gilbert J."/>
            <person name="Gill R."/>
            <person name="Gloeckner G."/>
            <person name="Gregory S.G."/>
            <person name="Gribble S."/>
            <person name="Griffiths C."/>
            <person name="Grocock R."/>
            <person name="Gu Y."/>
            <person name="Gwilliam R."/>
            <person name="Hamilton C."/>
            <person name="Hart E.A."/>
            <person name="Hawes A."/>
            <person name="Heath P.D."/>
            <person name="Heitmann K."/>
            <person name="Hennig S."/>
            <person name="Hernandez J."/>
            <person name="Hinzmann B."/>
            <person name="Ho S."/>
            <person name="Hoffs M."/>
            <person name="Howden P.J."/>
            <person name="Huckle E.J."/>
            <person name="Hume J."/>
            <person name="Hunt P.J."/>
            <person name="Hunt A.R."/>
            <person name="Isherwood J."/>
            <person name="Jacob L."/>
            <person name="Johnson D."/>
            <person name="Jones S."/>
            <person name="de Jong P.J."/>
            <person name="Joseph S.S."/>
            <person name="Keenan S."/>
            <person name="Kelly S."/>
            <person name="Kershaw J.K."/>
            <person name="Khan Z."/>
            <person name="Kioschis P."/>
            <person name="Klages S."/>
            <person name="Knights A.J."/>
            <person name="Kosiura A."/>
            <person name="Kovar-Smith C."/>
            <person name="Laird G.K."/>
            <person name="Langford C."/>
            <person name="Lawlor S."/>
            <person name="Leversha M."/>
            <person name="Lewis L."/>
            <person name="Liu W."/>
            <person name="Lloyd C."/>
            <person name="Lloyd D.M."/>
            <person name="Loulseged H."/>
            <person name="Loveland J.E."/>
            <person name="Lovell J.D."/>
            <person name="Lozado R."/>
            <person name="Lu J."/>
            <person name="Lyne R."/>
            <person name="Ma J."/>
            <person name="Maheshwari M."/>
            <person name="Matthews L.H."/>
            <person name="McDowall J."/>
            <person name="McLaren S."/>
            <person name="McMurray A."/>
            <person name="Meidl P."/>
            <person name="Meitinger T."/>
            <person name="Milne S."/>
            <person name="Miner G."/>
            <person name="Mistry S.L."/>
            <person name="Morgan M."/>
            <person name="Morris S."/>
            <person name="Mueller I."/>
            <person name="Mullikin J.C."/>
            <person name="Nguyen N."/>
            <person name="Nordsiek G."/>
            <person name="Nyakatura G."/>
            <person name="O'dell C.N."/>
            <person name="Okwuonu G."/>
            <person name="Palmer S."/>
            <person name="Pandian R."/>
            <person name="Parker D."/>
            <person name="Parrish J."/>
            <person name="Pasternak S."/>
            <person name="Patel D."/>
            <person name="Pearce A.V."/>
            <person name="Pearson D.M."/>
            <person name="Pelan S.E."/>
            <person name="Perez L."/>
            <person name="Porter K.M."/>
            <person name="Ramsey Y."/>
            <person name="Reichwald K."/>
            <person name="Rhodes S."/>
            <person name="Ridler K.A."/>
            <person name="Schlessinger D."/>
            <person name="Schueler M.G."/>
            <person name="Sehra H.K."/>
            <person name="Shaw-Smith C."/>
            <person name="Shen H."/>
            <person name="Sheridan E.M."/>
            <person name="Shownkeen R."/>
            <person name="Skuce C.D."/>
            <person name="Smith M.L."/>
            <person name="Sotheran E.C."/>
            <person name="Steingruber H.E."/>
            <person name="Steward C.A."/>
            <person name="Storey R."/>
            <person name="Swann R.M."/>
            <person name="Swarbreck D."/>
            <person name="Tabor P.E."/>
            <person name="Taudien S."/>
            <person name="Taylor T."/>
            <person name="Teague B."/>
            <person name="Thomas K."/>
            <person name="Thorpe A."/>
            <person name="Timms K."/>
            <person name="Tracey A."/>
            <person name="Trevanion S."/>
            <person name="Tromans A.C."/>
            <person name="d'Urso M."/>
            <person name="Verduzco D."/>
            <person name="Villasana D."/>
            <person name="Waldron L."/>
            <person name="Wall M."/>
            <person name="Wang Q."/>
            <person name="Warren J."/>
            <person name="Warry G.L."/>
            <person name="Wei X."/>
            <person name="West A."/>
            <person name="Whitehead S.L."/>
            <person name="Whiteley M.N."/>
            <person name="Wilkinson J.E."/>
            <person name="Willey D.L."/>
            <person name="Williams G."/>
            <person name="Williams L."/>
            <person name="Williamson A."/>
            <person name="Williamson H."/>
            <person name="Wilming L."/>
            <person name="Woodmansey R.L."/>
            <person name="Wray P.W."/>
            <person name="Yen J."/>
            <person name="Zhang J."/>
            <person name="Zhou J."/>
            <person name="Zoghbi H."/>
            <person name="Zorilla S."/>
            <person name="Buck D."/>
            <person name="Reinhardt R."/>
            <person name="Poustka A."/>
            <person name="Rosenthal A."/>
            <person name="Lehrach H."/>
            <person name="Meindl A."/>
            <person name="Minx P.J."/>
            <person name="Hillier L.W."/>
            <person name="Willard H.F."/>
            <person name="Wilson R.K."/>
            <person name="Waterston R.H."/>
            <person name="Rice C.M."/>
            <person name="Vaudin M."/>
            <person name="Coulson A."/>
            <person name="Nelson D.L."/>
            <person name="Weinstock G."/>
            <person name="Sulston J.E."/>
            <person name="Durbin R.M."/>
            <person name="Hubbard T."/>
            <person name="Gibbs R.A."/>
            <person name="Beck S."/>
            <person name="Rogers J."/>
            <person name="Bentley D.R."/>
        </authorList>
    </citation>
    <scope>NUCLEOTIDE SEQUENCE [LARGE SCALE GENOMIC DNA]</scope>
</reference>
<reference key="2">
    <citation type="journal article" date="2000" name="Int. J. Cancer">
        <title>MAGE-B5, MAGE-B6, MAGE-C2, and MAGE-C3: four new members of the MAGE family with tumor-specific expression.</title>
        <authorList>
            <person name="Lucas S."/>
            <person name="De Plaen E."/>
            <person name="Boon T."/>
        </authorList>
    </citation>
    <scope>NUCLEOTIDE SEQUENCE [GENOMIC DNA] OF 125-235</scope>
    <source>
        <tissue>Blood</tissue>
    </source>
</reference>
<gene>
    <name type="primary">MAGEB5</name>
</gene>
<accession>Q9BZ81</accession>
<feature type="chain" id="PRO_0000156716" description="Melanoma-associated antigen B5">
    <location>
        <begin position="1"/>
        <end position="275"/>
    </location>
</feature>
<feature type="domain" description="MAGE" evidence="1">
    <location>
        <begin position="40"/>
        <end position="239"/>
    </location>
</feature>
<feature type="region of interest" description="Disordered" evidence="2">
    <location>
        <begin position="1"/>
        <end position="33"/>
    </location>
</feature>
<feature type="compositionally biased region" description="Basic and acidic residues" evidence="2">
    <location>
        <begin position="11"/>
        <end position="21"/>
    </location>
</feature>
<feature type="compositionally biased region" description="Low complexity" evidence="2">
    <location>
        <begin position="23"/>
        <end position="33"/>
    </location>
</feature>
<keyword id="KW-1185">Reference proteome</keyword>
<keyword id="KW-0825">Tumor antigen</keyword>
<name>MAGB5_HUMAN</name>
<sequence length="275" mass="31906">MTSAGVFNAGSDERANSRDEEYPCSSEVSPSTESSCSNFINIKVGLLEQFLLYKFKMKQRILKEDMLKIVNPRYQNQFAEIHRRASEHIEVVFAVDLKEVNPTCHLYDLVSKLKLPNNGRIHVGKVLPKTGLLMTFLVVIFLKGNCANKEDTWKFLDMMQIYDGKKYYIYGEPRKLITQDFVRLTYLEYHQVPCSYPAHYQFLWGPRAYTETSKMKVLEYLAKVNDIAPGAFSSQYEEALQDEEESPSQRCSRNWHYCSGQDCLRAKFSSFSQPY</sequence>
<proteinExistence type="evidence at transcript level"/>
<evidence type="ECO:0000255" key="1">
    <source>
        <dbReference type="PROSITE-ProRule" id="PRU00127"/>
    </source>
</evidence>
<evidence type="ECO:0000256" key="2">
    <source>
        <dbReference type="SAM" id="MobiDB-lite"/>
    </source>
</evidence>
<dbReference type="EMBL" id="AF333705">
    <property type="protein sequence ID" value="AAK00357.1"/>
    <property type="molecule type" value="Genomic_DNA"/>
</dbReference>
<dbReference type="CCDS" id="CCDS65233.1"/>
<dbReference type="RefSeq" id="NP_001258681.1">
    <property type="nucleotide sequence ID" value="NM_001271752.1"/>
</dbReference>
<dbReference type="SMR" id="Q9BZ81"/>
<dbReference type="BioGRID" id="131448">
    <property type="interactions" value="1"/>
</dbReference>
<dbReference type="IntAct" id="Q9BZ81">
    <property type="interactions" value="1"/>
</dbReference>
<dbReference type="STRING" id="9606.ENSP00000473493"/>
<dbReference type="iPTMnet" id="Q9BZ81"/>
<dbReference type="PhosphoSitePlus" id="Q9BZ81"/>
<dbReference type="BioMuta" id="MAGEB5"/>
<dbReference type="MassIVE" id="Q9BZ81"/>
<dbReference type="PaxDb" id="9606-ENSP00000473493"/>
<dbReference type="PeptideAtlas" id="Q9BZ81"/>
<dbReference type="Antibodypedia" id="64767">
    <property type="antibodies" value="28 antibodies from 15 providers"/>
</dbReference>
<dbReference type="DNASU" id="347541"/>
<dbReference type="Ensembl" id="ENST00000602297.1">
    <property type="protein sequence ID" value="ENSP00000473493.1"/>
    <property type="gene ID" value="ENSG00000188408.5"/>
</dbReference>
<dbReference type="GeneID" id="347541"/>
<dbReference type="KEGG" id="hsa:347541"/>
<dbReference type="MANE-Select" id="ENST00000602297.1">
    <property type="protein sequence ID" value="ENSP00000473493.1"/>
    <property type="RefSeq nucleotide sequence ID" value="NM_001271752.1"/>
    <property type="RefSeq protein sequence ID" value="NP_001258681.1"/>
</dbReference>
<dbReference type="UCSC" id="uc031thc.1">
    <property type="organism name" value="human"/>
</dbReference>
<dbReference type="AGR" id="HGNC:23795"/>
<dbReference type="CTD" id="347541"/>
<dbReference type="GeneCards" id="MAGEB5"/>
<dbReference type="HGNC" id="HGNC:23795">
    <property type="gene designation" value="MAGEB5"/>
</dbReference>
<dbReference type="HPA" id="ENSG00000188408">
    <property type="expression patterns" value="Not detected"/>
</dbReference>
<dbReference type="MIM" id="300466">
    <property type="type" value="gene"/>
</dbReference>
<dbReference type="neXtProt" id="NX_Q9BZ81"/>
<dbReference type="OpenTargets" id="ENSG00000188408"/>
<dbReference type="VEuPathDB" id="HostDB:ENSG00000188408"/>
<dbReference type="eggNOG" id="KOG4562">
    <property type="taxonomic scope" value="Eukaryota"/>
</dbReference>
<dbReference type="GeneTree" id="ENSGT00940000163033"/>
<dbReference type="HOGENOM" id="CLU_039582_1_3_1"/>
<dbReference type="InParanoid" id="Q9BZ81"/>
<dbReference type="OMA" id="KIVNPRY"/>
<dbReference type="OrthoDB" id="205198at2759"/>
<dbReference type="PAN-GO" id="Q9BZ81">
    <property type="GO annotations" value="2 GO annotations based on evolutionary models"/>
</dbReference>
<dbReference type="PhylomeDB" id="Q9BZ81"/>
<dbReference type="TreeFam" id="TF328505"/>
<dbReference type="PathwayCommons" id="Q9BZ81"/>
<dbReference type="SignaLink" id="Q9BZ81"/>
<dbReference type="BioGRID-ORCS" id="347541">
    <property type="hits" value="14 hits in 714 CRISPR screens"/>
</dbReference>
<dbReference type="GenomeRNAi" id="347541"/>
<dbReference type="Pharos" id="Q9BZ81">
    <property type="development level" value="Tdark"/>
</dbReference>
<dbReference type="PRO" id="PR:Q9BZ81"/>
<dbReference type="Proteomes" id="UP000005640">
    <property type="component" value="Chromosome X"/>
</dbReference>
<dbReference type="RNAct" id="Q9BZ81">
    <property type="molecule type" value="protein"/>
</dbReference>
<dbReference type="Bgee" id="ENSG00000188408">
    <property type="expression patterns" value="Expressed in left testis and 1 other cell type or tissue"/>
</dbReference>
<dbReference type="GO" id="GO:0005634">
    <property type="term" value="C:nucleus"/>
    <property type="evidence" value="ECO:0000318"/>
    <property type="project" value="GO_Central"/>
</dbReference>
<dbReference type="GO" id="GO:0000122">
    <property type="term" value="P:negative regulation of transcription by RNA polymerase II"/>
    <property type="evidence" value="ECO:0000318"/>
    <property type="project" value="GO_Central"/>
</dbReference>
<dbReference type="FunFam" id="1.10.10.1200:FF:000007">
    <property type="entry name" value="Melanoma-associated antigen C2"/>
    <property type="match status" value="1"/>
</dbReference>
<dbReference type="FunFam" id="1.10.10.1210:FF:000001">
    <property type="entry name" value="melanoma-associated antigen D1"/>
    <property type="match status" value="1"/>
</dbReference>
<dbReference type="Gene3D" id="1.10.10.1200">
    <property type="entry name" value="MAGE homology domain, winged helix WH1 motif"/>
    <property type="match status" value="1"/>
</dbReference>
<dbReference type="Gene3D" id="1.10.10.1210">
    <property type="entry name" value="MAGE homology domain, winged helix WH2 motif"/>
    <property type="match status" value="1"/>
</dbReference>
<dbReference type="InterPro" id="IPR037445">
    <property type="entry name" value="MAGE"/>
</dbReference>
<dbReference type="InterPro" id="IPR041898">
    <property type="entry name" value="MAGE_WH1"/>
</dbReference>
<dbReference type="InterPro" id="IPR041899">
    <property type="entry name" value="MAGE_WH2"/>
</dbReference>
<dbReference type="InterPro" id="IPR002190">
    <property type="entry name" value="MHD_dom"/>
</dbReference>
<dbReference type="PANTHER" id="PTHR11736:SF35">
    <property type="entry name" value="MELANOMA-ASSOCIATED ANTIGEN B5"/>
    <property type="match status" value="1"/>
</dbReference>
<dbReference type="PANTHER" id="PTHR11736">
    <property type="entry name" value="MELANOMA-ASSOCIATED ANTIGEN MAGE ANTIGEN"/>
    <property type="match status" value="1"/>
</dbReference>
<dbReference type="Pfam" id="PF01454">
    <property type="entry name" value="MAGE"/>
    <property type="match status" value="1"/>
</dbReference>
<dbReference type="SMART" id="SM01373">
    <property type="entry name" value="MAGE"/>
    <property type="match status" value="1"/>
</dbReference>
<dbReference type="PROSITE" id="PS50838">
    <property type="entry name" value="MAGE"/>
    <property type="match status" value="1"/>
</dbReference>